<feature type="chain" id="PRO_1000002272" description="Acetate kinase">
    <location>
        <begin position="1"/>
        <end position="398"/>
    </location>
</feature>
<feature type="active site" description="Proton donor/acceptor" evidence="1">
    <location>
        <position position="146"/>
    </location>
</feature>
<feature type="binding site" evidence="1">
    <location>
        <position position="8"/>
    </location>
    <ligand>
        <name>Mg(2+)</name>
        <dbReference type="ChEBI" id="CHEBI:18420"/>
    </ligand>
</feature>
<feature type="binding site" evidence="1">
    <location>
        <position position="15"/>
    </location>
    <ligand>
        <name>ATP</name>
        <dbReference type="ChEBI" id="CHEBI:30616"/>
    </ligand>
</feature>
<feature type="binding site" evidence="1">
    <location>
        <position position="89"/>
    </location>
    <ligand>
        <name>substrate</name>
    </ligand>
</feature>
<feature type="binding site" evidence="1">
    <location>
        <begin position="206"/>
        <end position="210"/>
    </location>
    <ligand>
        <name>ATP</name>
        <dbReference type="ChEBI" id="CHEBI:30616"/>
    </ligand>
</feature>
<feature type="binding site" evidence="1">
    <location>
        <begin position="283"/>
        <end position="285"/>
    </location>
    <ligand>
        <name>ATP</name>
        <dbReference type="ChEBI" id="CHEBI:30616"/>
    </ligand>
</feature>
<feature type="binding site" evidence="1">
    <location>
        <begin position="331"/>
        <end position="335"/>
    </location>
    <ligand>
        <name>ATP</name>
        <dbReference type="ChEBI" id="CHEBI:30616"/>
    </ligand>
</feature>
<feature type="binding site" evidence="1">
    <location>
        <position position="383"/>
    </location>
    <ligand>
        <name>Mg(2+)</name>
        <dbReference type="ChEBI" id="CHEBI:18420"/>
    </ligand>
</feature>
<feature type="site" description="Transition state stabilizer" evidence="1">
    <location>
        <position position="178"/>
    </location>
</feature>
<feature type="site" description="Transition state stabilizer" evidence="1">
    <location>
        <position position="239"/>
    </location>
</feature>
<accession>Q1JJ12</accession>
<gene>
    <name evidence="1" type="primary">ackA</name>
    <name type="ordered locus">MGAS10270_Spy0096</name>
</gene>
<keyword id="KW-0067">ATP-binding</keyword>
<keyword id="KW-0963">Cytoplasm</keyword>
<keyword id="KW-0418">Kinase</keyword>
<keyword id="KW-0460">Magnesium</keyword>
<keyword id="KW-0479">Metal-binding</keyword>
<keyword id="KW-0547">Nucleotide-binding</keyword>
<keyword id="KW-0808">Transferase</keyword>
<organism>
    <name type="scientific">Streptococcus pyogenes serotype M2 (strain MGAS10270)</name>
    <dbReference type="NCBI Taxonomy" id="370552"/>
    <lineage>
        <taxon>Bacteria</taxon>
        <taxon>Bacillati</taxon>
        <taxon>Bacillota</taxon>
        <taxon>Bacilli</taxon>
        <taxon>Lactobacillales</taxon>
        <taxon>Streptococcaceae</taxon>
        <taxon>Streptococcus</taxon>
    </lineage>
</organism>
<protein>
    <recommendedName>
        <fullName evidence="1">Acetate kinase</fullName>
        <ecNumber evidence="1">2.7.2.1</ecNumber>
    </recommendedName>
    <alternativeName>
        <fullName evidence="1">Acetokinase</fullName>
    </alternativeName>
</protein>
<evidence type="ECO:0000255" key="1">
    <source>
        <dbReference type="HAMAP-Rule" id="MF_00020"/>
    </source>
</evidence>
<reference key="1">
    <citation type="journal article" date="2006" name="Proc. Natl. Acad. Sci. U.S.A.">
        <title>Molecular genetic anatomy of inter- and intraserotype variation in the human bacterial pathogen group A Streptococcus.</title>
        <authorList>
            <person name="Beres S.B."/>
            <person name="Richter E.W."/>
            <person name="Nagiec M.J."/>
            <person name="Sumby P."/>
            <person name="Porcella S.F."/>
            <person name="DeLeo F.R."/>
            <person name="Musser J.M."/>
        </authorList>
    </citation>
    <scope>NUCLEOTIDE SEQUENCE [LARGE SCALE GENOMIC DNA]</scope>
    <source>
        <strain>MGAS10270</strain>
    </source>
</reference>
<dbReference type="EC" id="2.7.2.1" evidence="1"/>
<dbReference type="EMBL" id="CP000260">
    <property type="protein sequence ID" value="ABF33161.1"/>
    <property type="molecule type" value="Genomic_DNA"/>
</dbReference>
<dbReference type="SMR" id="Q1JJ12"/>
<dbReference type="KEGG" id="sph:MGAS10270_Spy0096"/>
<dbReference type="HOGENOM" id="CLU_020352_0_1_9"/>
<dbReference type="UniPathway" id="UPA00340">
    <property type="reaction ID" value="UER00458"/>
</dbReference>
<dbReference type="Proteomes" id="UP000002436">
    <property type="component" value="Chromosome"/>
</dbReference>
<dbReference type="GO" id="GO:0005737">
    <property type="term" value="C:cytoplasm"/>
    <property type="evidence" value="ECO:0007669"/>
    <property type="project" value="UniProtKB-SubCell"/>
</dbReference>
<dbReference type="GO" id="GO:0008776">
    <property type="term" value="F:acetate kinase activity"/>
    <property type="evidence" value="ECO:0007669"/>
    <property type="project" value="UniProtKB-UniRule"/>
</dbReference>
<dbReference type="GO" id="GO:0005524">
    <property type="term" value="F:ATP binding"/>
    <property type="evidence" value="ECO:0007669"/>
    <property type="project" value="UniProtKB-KW"/>
</dbReference>
<dbReference type="GO" id="GO:0000287">
    <property type="term" value="F:magnesium ion binding"/>
    <property type="evidence" value="ECO:0007669"/>
    <property type="project" value="UniProtKB-UniRule"/>
</dbReference>
<dbReference type="GO" id="GO:0006083">
    <property type="term" value="P:acetate metabolic process"/>
    <property type="evidence" value="ECO:0007669"/>
    <property type="project" value="TreeGrafter"/>
</dbReference>
<dbReference type="GO" id="GO:0006085">
    <property type="term" value="P:acetyl-CoA biosynthetic process"/>
    <property type="evidence" value="ECO:0007669"/>
    <property type="project" value="UniProtKB-UniRule"/>
</dbReference>
<dbReference type="CDD" id="cd24010">
    <property type="entry name" value="ASKHA_NBD_AcK_PK"/>
    <property type="match status" value="1"/>
</dbReference>
<dbReference type="Gene3D" id="3.30.420.40">
    <property type="match status" value="2"/>
</dbReference>
<dbReference type="HAMAP" id="MF_00020">
    <property type="entry name" value="Acetate_kinase"/>
    <property type="match status" value="1"/>
</dbReference>
<dbReference type="InterPro" id="IPR004372">
    <property type="entry name" value="Ac/propionate_kinase"/>
</dbReference>
<dbReference type="InterPro" id="IPR000890">
    <property type="entry name" value="Aliphatic_acid_kin_short-chain"/>
</dbReference>
<dbReference type="InterPro" id="IPR023865">
    <property type="entry name" value="Aliphatic_acid_kinase_CS"/>
</dbReference>
<dbReference type="InterPro" id="IPR043129">
    <property type="entry name" value="ATPase_NBD"/>
</dbReference>
<dbReference type="NCBIfam" id="TIGR00016">
    <property type="entry name" value="ackA"/>
    <property type="match status" value="1"/>
</dbReference>
<dbReference type="PANTHER" id="PTHR21060">
    <property type="entry name" value="ACETATE KINASE"/>
    <property type="match status" value="1"/>
</dbReference>
<dbReference type="PANTHER" id="PTHR21060:SF15">
    <property type="entry name" value="ACETATE KINASE-RELATED"/>
    <property type="match status" value="1"/>
</dbReference>
<dbReference type="Pfam" id="PF00871">
    <property type="entry name" value="Acetate_kinase"/>
    <property type="match status" value="1"/>
</dbReference>
<dbReference type="PIRSF" id="PIRSF000722">
    <property type="entry name" value="Acetate_prop_kin"/>
    <property type="match status" value="1"/>
</dbReference>
<dbReference type="PRINTS" id="PR00471">
    <property type="entry name" value="ACETATEKNASE"/>
</dbReference>
<dbReference type="SUPFAM" id="SSF53067">
    <property type="entry name" value="Actin-like ATPase domain"/>
    <property type="match status" value="2"/>
</dbReference>
<dbReference type="PROSITE" id="PS01075">
    <property type="entry name" value="ACETATE_KINASE_1"/>
    <property type="match status" value="1"/>
</dbReference>
<dbReference type="PROSITE" id="PS01076">
    <property type="entry name" value="ACETATE_KINASE_2"/>
    <property type="match status" value="1"/>
</dbReference>
<proteinExistence type="inferred from homology"/>
<comment type="function">
    <text evidence="1">Catalyzes the formation of acetyl phosphate from acetate and ATP. Can also catalyze the reverse reaction.</text>
</comment>
<comment type="catalytic activity">
    <reaction evidence="1">
        <text>acetate + ATP = acetyl phosphate + ADP</text>
        <dbReference type="Rhea" id="RHEA:11352"/>
        <dbReference type="ChEBI" id="CHEBI:22191"/>
        <dbReference type="ChEBI" id="CHEBI:30089"/>
        <dbReference type="ChEBI" id="CHEBI:30616"/>
        <dbReference type="ChEBI" id="CHEBI:456216"/>
        <dbReference type="EC" id="2.7.2.1"/>
    </reaction>
</comment>
<comment type="cofactor">
    <cofactor evidence="1">
        <name>Mg(2+)</name>
        <dbReference type="ChEBI" id="CHEBI:18420"/>
    </cofactor>
    <cofactor evidence="1">
        <name>Mn(2+)</name>
        <dbReference type="ChEBI" id="CHEBI:29035"/>
    </cofactor>
    <text evidence="1">Mg(2+). Can also accept Mn(2+).</text>
</comment>
<comment type="pathway">
    <text evidence="1">Metabolic intermediate biosynthesis; acetyl-CoA biosynthesis; acetyl-CoA from acetate: step 1/2.</text>
</comment>
<comment type="subunit">
    <text evidence="1">Homodimer.</text>
</comment>
<comment type="subcellular location">
    <subcellularLocation>
        <location evidence="1">Cytoplasm</location>
    </subcellularLocation>
</comment>
<comment type="similarity">
    <text evidence="1">Belongs to the acetokinase family.</text>
</comment>
<name>ACKA_STRPD</name>
<sequence>MSKTIAINAGSSSLKWQLYQMPEEAVLAQGIIERIGLKDSISTVKYDGKKEEQILDIHDHTEAVKILLNDLIHFGIIAAYDEITGVGHRVVAGGELFKESVVVNDKVLEHIEELSVLAPLHNPGAAAGIRAFRDILPDITSVCVFDTSFHTSMAKHTYLYPIPQKYYTDYKVRKYGAHGTSHKYVAQEAAKMLGRPLEELKLITAHIGNGVSITANYHGKSVDTSMGFTPLAGPMMGTRSGDIDPAIIPYLIEQDPELKDAADVVNMLNKKSGLSGVSGISSDMRDIEAGLQEDNPDAVLAYNIFIDRIKKCIGQYFAVLNGADALVFTAGMGENAPLMRQDVIGGLTWFGMDIDPEKNVFGYRGDISTPESKVKVLVISTDEELCIARDVERLKNTK</sequence>